<organism>
    <name type="scientific">Lotus japonicus</name>
    <name type="common">Lotus corniculatus var. japonicus</name>
    <dbReference type="NCBI Taxonomy" id="34305"/>
    <lineage>
        <taxon>Eukaryota</taxon>
        <taxon>Viridiplantae</taxon>
        <taxon>Streptophyta</taxon>
        <taxon>Embryophyta</taxon>
        <taxon>Tracheophyta</taxon>
        <taxon>Spermatophyta</taxon>
        <taxon>Magnoliopsida</taxon>
        <taxon>eudicotyledons</taxon>
        <taxon>Gunneridae</taxon>
        <taxon>Pentapetalae</taxon>
        <taxon>rosids</taxon>
        <taxon>fabids</taxon>
        <taxon>Fabales</taxon>
        <taxon>Fabaceae</taxon>
        <taxon>Papilionoideae</taxon>
        <taxon>50 kb inversion clade</taxon>
        <taxon>NPAAA clade</taxon>
        <taxon>Hologalegina</taxon>
        <taxon>robinioid clade</taxon>
        <taxon>Loteae</taxon>
        <taxon>Lotus</taxon>
    </lineage>
</organism>
<name>PSBH_LOTJA</name>
<accession>Q9BBQ7</accession>
<gene>
    <name evidence="2" type="primary">psbH</name>
</gene>
<protein>
    <recommendedName>
        <fullName evidence="2">Photosystem II reaction center protein H</fullName>
        <shortName evidence="2">PSII-H</shortName>
    </recommendedName>
    <alternativeName>
        <fullName evidence="2">Photosystem II 10 kDa phosphoprotein</fullName>
    </alternativeName>
</protein>
<sequence>MATQTVEDSSRARPRQTSVGSLLKPLNSEYGKVAPGWGTTPLMGIAMALFAIFLSIILEIYNSSILLDGISMN</sequence>
<geneLocation type="chloroplast"/>
<keyword id="KW-0150">Chloroplast</keyword>
<keyword id="KW-0472">Membrane</keyword>
<keyword id="KW-0597">Phosphoprotein</keyword>
<keyword id="KW-0602">Photosynthesis</keyword>
<keyword id="KW-0604">Photosystem II</keyword>
<keyword id="KW-0934">Plastid</keyword>
<keyword id="KW-0793">Thylakoid</keyword>
<keyword id="KW-0812">Transmembrane</keyword>
<keyword id="KW-1133">Transmembrane helix</keyword>
<reference key="1">
    <citation type="journal article" date="2000" name="DNA Res.">
        <title>Complete structure of the chloroplast genome of a legume, Lotus japonicus.</title>
        <authorList>
            <person name="Kato T."/>
            <person name="Kaneko T."/>
            <person name="Sato S."/>
            <person name="Nakamura Y."/>
            <person name="Tabata S."/>
        </authorList>
    </citation>
    <scope>NUCLEOTIDE SEQUENCE [LARGE SCALE GENOMIC DNA]</scope>
    <source>
        <strain>cv. Miyakojima MG-20</strain>
    </source>
</reference>
<comment type="function">
    <text evidence="2">One of the components of the core complex of photosystem II (PSII), required for its stability and/or assembly. PSII is a light-driven water:plastoquinone oxidoreductase that uses light energy to abstract electrons from H(2)O, generating O(2) and a proton gradient subsequently used for ATP formation. It consists of a core antenna complex that captures photons, and an electron transfer chain that converts photonic excitation into a charge separation.</text>
</comment>
<comment type="subunit">
    <text evidence="2">PSII is composed of 1 copy each of membrane proteins PsbA, PsbB, PsbC, PsbD, PsbE, PsbF, PsbH, PsbI, PsbJ, PsbK, PsbL, PsbM, PsbT, PsbX, PsbY, PsbZ, Psb30/Ycf12, at least 3 peripheral proteins of the oxygen-evolving complex and a large number of cofactors. It forms dimeric complexes.</text>
</comment>
<comment type="subcellular location">
    <subcellularLocation>
        <location evidence="2">Plastid</location>
        <location evidence="2">Chloroplast thylakoid membrane</location>
        <topology evidence="2">Single-pass membrane protein</topology>
    </subcellularLocation>
</comment>
<comment type="PTM">
    <text evidence="2">Phosphorylation is a light-dependent reaction catalyzed by a membrane-bound kinase; phosphorylation occurs on Thr residue(s) in the N-terminus of the protein.</text>
</comment>
<comment type="similarity">
    <text evidence="2">Belongs to the PsbH family.</text>
</comment>
<evidence type="ECO:0000250" key="1">
    <source>
        <dbReference type="UniProtKB" id="P56780"/>
    </source>
</evidence>
<evidence type="ECO:0000255" key="2">
    <source>
        <dbReference type="HAMAP-Rule" id="MF_00752"/>
    </source>
</evidence>
<evidence type="ECO:0000256" key="3">
    <source>
        <dbReference type="SAM" id="MobiDB-lite"/>
    </source>
</evidence>
<feature type="initiator methionine" description="Removed" evidence="1">
    <location>
        <position position="1"/>
    </location>
</feature>
<feature type="chain" id="PRO_0000070514" description="Photosystem II reaction center protein H">
    <location>
        <begin position="2"/>
        <end position="73"/>
    </location>
</feature>
<feature type="transmembrane region" description="Helical" evidence="2">
    <location>
        <begin position="41"/>
        <end position="61"/>
    </location>
</feature>
<feature type="region of interest" description="Disordered" evidence="3">
    <location>
        <begin position="1"/>
        <end position="20"/>
    </location>
</feature>
<feature type="modified residue" description="Phosphothreonine" evidence="2">
    <location>
        <position position="3"/>
    </location>
</feature>
<feature type="modified residue" description="Phosphothreonine" evidence="2">
    <location>
        <position position="5"/>
    </location>
</feature>
<dbReference type="EMBL" id="AP002983">
    <property type="protein sequence ID" value="BAB33225.1"/>
    <property type="molecule type" value="Genomic_DNA"/>
</dbReference>
<dbReference type="RefSeq" id="NP_084826.1">
    <property type="nucleotide sequence ID" value="NC_002694.1"/>
</dbReference>
<dbReference type="SMR" id="Q9BBQ7"/>
<dbReference type="GeneID" id="802931"/>
<dbReference type="OMA" id="RTWLGDI"/>
<dbReference type="GO" id="GO:0009535">
    <property type="term" value="C:chloroplast thylakoid membrane"/>
    <property type="evidence" value="ECO:0007669"/>
    <property type="project" value="UniProtKB-SubCell"/>
</dbReference>
<dbReference type="GO" id="GO:0009523">
    <property type="term" value="C:photosystem II"/>
    <property type="evidence" value="ECO:0007669"/>
    <property type="project" value="UniProtKB-KW"/>
</dbReference>
<dbReference type="GO" id="GO:0042301">
    <property type="term" value="F:phosphate ion binding"/>
    <property type="evidence" value="ECO:0007669"/>
    <property type="project" value="InterPro"/>
</dbReference>
<dbReference type="GO" id="GO:0015979">
    <property type="term" value="P:photosynthesis"/>
    <property type="evidence" value="ECO:0007669"/>
    <property type="project" value="UniProtKB-UniRule"/>
</dbReference>
<dbReference type="GO" id="GO:0050821">
    <property type="term" value="P:protein stabilization"/>
    <property type="evidence" value="ECO:0007669"/>
    <property type="project" value="InterPro"/>
</dbReference>
<dbReference type="FunFam" id="1.20.5.880:FF:000001">
    <property type="entry name" value="Photosystem II reaction center protein H"/>
    <property type="match status" value="1"/>
</dbReference>
<dbReference type="Gene3D" id="1.20.5.880">
    <property type="entry name" value="Photosystem II reaction center protein H"/>
    <property type="match status" value="1"/>
</dbReference>
<dbReference type="HAMAP" id="MF_00752">
    <property type="entry name" value="PSII_PsbH"/>
    <property type="match status" value="1"/>
</dbReference>
<dbReference type="InterPro" id="IPR001056">
    <property type="entry name" value="PSII_PsbH"/>
</dbReference>
<dbReference type="InterPro" id="IPR036863">
    <property type="entry name" value="PSII_PsbH_sf"/>
</dbReference>
<dbReference type="NCBIfam" id="NF002728">
    <property type="entry name" value="PRK02624.1"/>
    <property type="match status" value="1"/>
</dbReference>
<dbReference type="PANTHER" id="PTHR34469">
    <property type="entry name" value="PHOTOSYSTEM II REACTION CENTER PROTEIN H"/>
    <property type="match status" value="1"/>
</dbReference>
<dbReference type="PANTHER" id="PTHR34469:SF4">
    <property type="entry name" value="PHOTOSYSTEM II REACTION CENTER PROTEIN H"/>
    <property type="match status" value="1"/>
</dbReference>
<dbReference type="Pfam" id="PF00737">
    <property type="entry name" value="PsbH"/>
    <property type="match status" value="1"/>
</dbReference>
<dbReference type="SUPFAM" id="SSF161025">
    <property type="entry name" value="Photosystem II 10 kDa phosphoprotein PsbH"/>
    <property type="match status" value="1"/>
</dbReference>
<proteinExistence type="inferred from homology"/>